<proteinExistence type="inferred from homology"/>
<feature type="chain" id="PRO_1000071910" description="Nucleoid-associated protein Asuc_0997">
    <location>
        <begin position="1"/>
        <end position="109"/>
    </location>
</feature>
<feature type="region of interest" description="Disordered" evidence="2">
    <location>
        <begin position="1"/>
        <end position="23"/>
    </location>
</feature>
<name>Y997_ACTSZ</name>
<keyword id="KW-0963">Cytoplasm</keyword>
<keyword id="KW-0238">DNA-binding</keyword>
<keyword id="KW-1185">Reference proteome</keyword>
<organism>
    <name type="scientific">Actinobacillus succinogenes (strain ATCC 55618 / DSM 22257 / CCUG 43843 / 130Z)</name>
    <dbReference type="NCBI Taxonomy" id="339671"/>
    <lineage>
        <taxon>Bacteria</taxon>
        <taxon>Pseudomonadati</taxon>
        <taxon>Pseudomonadota</taxon>
        <taxon>Gammaproteobacteria</taxon>
        <taxon>Pasteurellales</taxon>
        <taxon>Pasteurellaceae</taxon>
        <taxon>Actinobacillus</taxon>
    </lineage>
</organism>
<protein>
    <recommendedName>
        <fullName evidence="1">Nucleoid-associated protein Asuc_0997</fullName>
    </recommendedName>
</protein>
<gene>
    <name type="ordered locus">Asuc_0997</name>
</gene>
<sequence length="109" mass="12019">MFGKGGLGGLMKQAQQMQERMQKMQDEIAQLEVTGESGAGLVKITLNGAHNCRRIEIDPSLMEEDKEMLEDLIAAAFNDAVRRAEEMQKEKMASVTAGMSLPPGFKMPF</sequence>
<dbReference type="EMBL" id="CP000746">
    <property type="protein sequence ID" value="ABR74365.1"/>
    <property type="molecule type" value="Genomic_DNA"/>
</dbReference>
<dbReference type="RefSeq" id="WP_012072742.1">
    <property type="nucleotide sequence ID" value="NC_009655.1"/>
</dbReference>
<dbReference type="SMR" id="A6VN18"/>
<dbReference type="STRING" id="339671.Asuc_0997"/>
<dbReference type="KEGG" id="asu:Asuc_0997"/>
<dbReference type="eggNOG" id="COG0718">
    <property type="taxonomic scope" value="Bacteria"/>
</dbReference>
<dbReference type="HOGENOM" id="CLU_140930_0_0_6"/>
<dbReference type="OrthoDB" id="9808738at2"/>
<dbReference type="Proteomes" id="UP000001114">
    <property type="component" value="Chromosome"/>
</dbReference>
<dbReference type="GO" id="GO:0043590">
    <property type="term" value="C:bacterial nucleoid"/>
    <property type="evidence" value="ECO:0007669"/>
    <property type="project" value="UniProtKB-UniRule"/>
</dbReference>
<dbReference type="GO" id="GO:0005829">
    <property type="term" value="C:cytosol"/>
    <property type="evidence" value="ECO:0007669"/>
    <property type="project" value="TreeGrafter"/>
</dbReference>
<dbReference type="GO" id="GO:0003677">
    <property type="term" value="F:DNA binding"/>
    <property type="evidence" value="ECO:0007669"/>
    <property type="project" value="UniProtKB-UniRule"/>
</dbReference>
<dbReference type="FunFam" id="3.30.1310.10:FF:000001">
    <property type="entry name" value="Nucleoid-associated protein YbaB"/>
    <property type="match status" value="1"/>
</dbReference>
<dbReference type="Gene3D" id="3.30.1310.10">
    <property type="entry name" value="Nucleoid-associated protein YbaB-like domain"/>
    <property type="match status" value="1"/>
</dbReference>
<dbReference type="HAMAP" id="MF_00274">
    <property type="entry name" value="DNA_YbaB_EbfC"/>
    <property type="match status" value="1"/>
</dbReference>
<dbReference type="InterPro" id="IPR036894">
    <property type="entry name" value="YbaB-like_sf"/>
</dbReference>
<dbReference type="InterPro" id="IPR004401">
    <property type="entry name" value="YbaB/EbfC"/>
</dbReference>
<dbReference type="NCBIfam" id="TIGR00103">
    <property type="entry name" value="DNA_YbaB_EbfC"/>
    <property type="match status" value="1"/>
</dbReference>
<dbReference type="PANTHER" id="PTHR33449">
    <property type="entry name" value="NUCLEOID-ASSOCIATED PROTEIN YBAB"/>
    <property type="match status" value="1"/>
</dbReference>
<dbReference type="PANTHER" id="PTHR33449:SF1">
    <property type="entry name" value="NUCLEOID-ASSOCIATED PROTEIN YBAB"/>
    <property type="match status" value="1"/>
</dbReference>
<dbReference type="Pfam" id="PF02575">
    <property type="entry name" value="YbaB_DNA_bd"/>
    <property type="match status" value="1"/>
</dbReference>
<dbReference type="PIRSF" id="PIRSF004555">
    <property type="entry name" value="UCP004555"/>
    <property type="match status" value="1"/>
</dbReference>
<dbReference type="SUPFAM" id="SSF82607">
    <property type="entry name" value="YbaB-like"/>
    <property type="match status" value="1"/>
</dbReference>
<evidence type="ECO:0000255" key="1">
    <source>
        <dbReference type="HAMAP-Rule" id="MF_00274"/>
    </source>
</evidence>
<evidence type="ECO:0000256" key="2">
    <source>
        <dbReference type="SAM" id="MobiDB-lite"/>
    </source>
</evidence>
<reference key="1">
    <citation type="journal article" date="2010" name="BMC Genomics">
        <title>A genomic perspective on the potential of Actinobacillus succinogenes for industrial succinate production.</title>
        <authorList>
            <person name="McKinlay J.B."/>
            <person name="Laivenieks M."/>
            <person name="Schindler B.D."/>
            <person name="McKinlay A.A."/>
            <person name="Siddaramappa S."/>
            <person name="Challacombe J.F."/>
            <person name="Lowry S.R."/>
            <person name="Clum A."/>
            <person name="Lapidus A.L."/>
            <person name="Burkhart K.B."/>
            <person name="Harkins V."/>
            <person name="Vieille C."/>
        </authorList>
    </citation>
    <scope>NUCLEOTIDE SEQUENCE [LARGE SCALE GENOMIC DNA]</scope>
    <source>
        <strain>ATCC 55618 / DSM 22257 / CCUG 43843 / 130Z</strain>
    </source>
</reference>
<comment type="function">
    <text evidence="1">Binds to DNA and alters its conformation. May be involved in regulation of gene expression, nucleoid organization and DNA protection.</text>
</comment>
<comment type="subunit">
    <text evidence="1">Homodimer.</text>
</comment>
<comment type="subcellular location">
    <subcellularLocation>
        <location evidence="1">Cytoplasm</location>
        <location evidence="1">Nucleoid</location>
    </subcellularLocation>
</comment>
<comment type="similarity">
    <text evidence="1">Belongs to the YbaB/EbfC family.</text>
</comment>
<accession>A6VN18</accession>